<comment type="function">
    <text evidence="1">Part of an energy-coupled inorganic carbon pump.</text>
</comment>
<comment type="cofactor">
    <cofactor evidence="1">
        <name>Zn(2+)</name>
        <dbReference type="ChEBI" id="CHEBI:29105"/>
    </cofactor>
</comment>
<comment type="subunit">
    <text evidence="1">Forms a complex with DabB.</text>
</comment>
<comment type="subcellular location">
    <subcellularLocation>
        <location evidence="1">Cell membrane</location>
        <topology evidence="1">Peripheral membrane protein</topology>
    </subcellularLocation>
</comment>
<comment type="similarity">
    <text evidence="1">Belongs to the inorganic carbon transporter (TC 9.A.2) DabA family.</text>
</comment>
<feature type="chain" id="PRO_0000387249" description="Probable inorganic carbon transporter subunit DabA">
    <location>
        <begin position="1"/>
        <end position="875"/>
    </location>
</feature>
<feature type="binding site" evidence="1">
    <location>
        <position position="399"/>
    </location>
    <ligand>
        <name>Zn(2+)</name>
        <dbReference type="ChEBI" id="CHEBI:29105"/>
    </ligand>
</feature>
<feature type="binding site" evidence="1">
    <location>
        <position position="401"/>
    </location>
    <ligand>
        <name>Zn(2+)</name>
        <dbReference type="ChEBI" id="CHEBI:29105"/>
    </ligand>
</feature>
<feature type="binding site" evidence="1">
    <location>
        <position position="581"/>
    </location>
    <ligand>
        <name>Zn(2+)</name>
        <dbReference type="ChEBI" id="CHEBI:29105"/>
    </ligand>
</feature>
<feature type="binding site" evidence="1">
    <location>
        <position position="596"/>
    </location>
    <ligand>
        <name>Zn(2+)</name>
        <dbReference type="ChEBI" id="CHEBI:29105"/>
    </ligand>
</feature>
<proteinExistence type="inferred from homology"/>
<sequence>MMSIQSIITKETLKKKDTNIEIQEKNMNDLVESASRVIAPLWPIATFAAHHPWMGLEKQSFEQVADWLKEARNVDIYPSASMIHSAKAKGEIEESFLQSGLSRWLDSQSFHIPRKKVEQFCQAALKLEELPSSLLSSPQLNKLAEEMSYINTESMKDSFLQPVSSFIENQKGENLSDILNYHIIKWCKLYLDDSGSSWTMPNREQGLYRAWHHLIKFDPALSKNERSVLKDWPEDAEIALTRALSELGISESNKQAYLEGHLLALPGWAGMILWRSQQSTQEQELLIQYLAVRISMELAIVKPYLPIKNQKAEKKIAIVPLIASWIYWGNISTLKWSQMSAAEQSELLAFAYRFDENIRRKLWLEAWEQTHAEQLKKKISSKQRATNDKKRALAQLAFCIDVRSEPFRRHLEKLGPFETFGIAGFFGLPIATSELGSSDSHPSLPVILKPKHQIKELTDENEFKNYQQRKKIDSSVSYTFKTMKQNVLTSMLLPEVSGPLLGLQMVTRSFVPRRVGSFLRNLRKTMLQKPDTTFSLNHVHDTKCEIPIGFTKEEKVNYVRQALKMVGLTEKFAPLVVMCGHSSQSTNNPYAAALECGACGGAAGGFNAKVFATLCNLPEVREALSAEGIKIPEDTIFAAAEHKTTVDELEWIYIPELSETAQEAFDSIESVMPNVSQHANRERLMQLPNFKTEIKNPSKEAHRFAEDWSEIRPEWGLARNASFIIGQRELTQDCDLEGRAFLHNYDWKQDGSGDILASIIAGPGTVAQWINLQYYASTVAPHYYGSGNKTTQTVTAGLGVMQGNASDLLPGLPWQSVMQSDRETYHSPLRLLIVIQAPTKYIEHLLNNDFTFREKVQNGWVRLASVDPEGRWKNW</sequence>
<name>DABA_BACAH</name>
<dbReference type="EMBL" id="CP000485">
    <property type="protein sequence ID" value="ABK86107.1"/>
    <property type="molecule type" value="Genomic_DNA"/>
</dbReference>
<dbReference type="SMR" id="A0RFW4"/>
<dbReference type="KEGG" id="btl:BALH_2835"/>
<dbReference type="HOGENOM" id="CLU_009885_0_0_9"/>
<dbReference type="GO" id="GO:0005886">
    <property type="term" value="C:plasma membrane"/>
    <property type="evidence" value="ECO:0007669"/>
    <property type="project" value="UniProtKB-SubCell"/>
</dbReference>
<dbReference type="GO" id="GO:0008270">
    <property type="term" value="F:zinc ion binding"/>
    <property type="evidence" value="ECO:0007669"/>
    <property type="project" value="UniProtKB-UniRule"/>
</dbReference>
<dbReference type="HAMAP" id="MF_01871">
    <property type="entry name" value="DabA"/>
    <property type="match status" value="1"/>
</dbReference>
<dbReference type="InterPro" id="IPR018752">
    <property type="entry name" value="DabA"/>
</dbReference>
<dbReference type="PANTHER" id="PTHR38344:SF1">
    <property type="entry name" value="INORGANIC CARBON TRANSPORTER SUBUNIT DABA-RELATED"/>
    <property type="match status" value="1"/>
</dbReference>
<dbReference type="PANTHER" id="PTHR38344">
    <property type="entry name" value="UPF0753 PROTEIN AQ_863"/>
    <property type="match status" value="1"/>
</dbReference>
<dbReference type="Pfam" id="PF10070">
    <property type="entry name" value="DabA"/>
    <property type="match status" value="1"/>
</dbReference>
<evidence type="ECO:0000255" key="1">
    <source>
        <dbReference type="HAMAP-Rule" id="MF_01871"/>
    </source>
</evidence>
<protein>
    <recommendedName>
        <fullName evidence="1">Probable inorganic carbon transporter subunit DabA</fullName>
    </recommendedName>
</protein>
<reference key="1">
    <citation type="journal article" date="2007" name="J. Bacteriol.">
        <title>The complete genome sequence of Bacillus thuringiensis Al Hakam.</title>
        <authorList>
            <person name="Challacombe J.F."/>
            <person name="Altherr M.R."/>
            <person name="Xie G."/>
            <person name="Bhotika S.S."/>
            <person name="Brown N."/>
            <person name="Bruce D."/>
            <person name="Campbell C.S."/>
            <person name="Campbell M.L."/>
            <person name="Chen J."/>
            <person name="Chertkov O."/>
            <person name="Cleland C."/>
            <person name="Dimitrijevic M."/>
            <person name="Doggett N.A."/>
            <person name="Fawcett J.J."/>
            <person name="Glavina T."/>
            <person name="Goodwin L.A."/>
            <person name="Green L.D."/>
            <person name="Han C.S."/>
            <person name="Hill K.K."/>
            <person name="Hitchcock P."/>
            <person name="Jackson P.J."/>
            <person name="Keim P."/>
            <person name="Kewalramani A.R."/>
            <person name="Longmire J."/>
            <person name="Lucas S."/>
            <person name="Malfatti S."/>
            <person name="Martinez D."/>
            <person name="McMurry K."/>
            <person name="Meincke L.J."/>
            <person name="Misra M."/>
            <person name="Moseman B.L."/>
            <person name="Mundt M."/>
            <person name="Munk A.C."/>
            <person name="Okinaka R.T."/>
            <person name="Parson-Quintana B."/>
            <person name="Reilly L.P."/>
            <person name="Richardson P."/>
            <person name="Robinson D.L."/>
            <person name="Saunders E."/>
            <person name="Tapia R."/>
            <person name="Tesmer J.G."/>
            <person name="Thayer N."/>
            <person name="Thompson L.S."/>
            <person name="Tice H."/>
            <person name="Ticknor L.O."/>
            <person name="Wills P.L."/>
            <person name="Gilna P."/>
            <person name="Brettin T.S."/>
        </authorList>
    </citation>
    <scope>NUCLEOTIDE SEQUENCE [LARGE SCALE GENOMIC DNA]</scope>
    <source>
        <strain>Al Hakam</strain>
    </source>
</reference>
<gene>
    <name evidence="1" type="primary">dabA</name>
    <name type="ordered locus">BALH_2835</name>
</gene>
<keyword id="KW-1003">Cell membrane</keyword>
<keyword id="KW-0472">Membrane</keyword>
<keyword id="KW-0479">Metal-binding</keyword>
<keyword id="KW-0813">Transport</keyword>
<keyword id="KW-0862">Zinc</keyword>
<accession>A0RFW4</accession>
<organism>
    <name type="scientific">Bacillus thuringiensis (strain Al Hakam)</name>
    <dbReference type="NCBI Taxonomy" id="412694"/>
    <lineage>
        <taxon>Bacteria</taxon>
        <taxon>Bacillati</taxon>
        <taxon>Bacillota</taxon>
        <taxon>Bacilli</taxon>
        <taxon>Bacillales</taxon>
        <taxon>Bacillaceae</taxon>
        <taxon>Bacillus</taxon>
        <taxon>Bacillus cereus group</taxon>
    </lineage>
</organism>